<gene>
    <name type="primary">KRTAP4-7</name>
    <name type="synonym">KAP4.7</name>
    <name type="synonym">KRTAP4.7</name>
</gene>
<feature type="chain" id="PRO_0000185174" description="Keratin-associated protein 4-7">
    <location>
        <begin position="1"/>
        <end position="155"/>
    </location>
</feature>
<feature type="repeat" description="1">
    <location>
        <begin position="5"/>
        <end position="9"/>
    </location>
</feature>
<feature type="repeat" description="2">
    <location>
        <begin position="24"/>
        <end position="28"/>
    </location>
</feature>
<feature type="repeat" description="3">
    <location>
        <begin position="29"/>
        <end position="33"/>
    </location>
</feature>
<feature type="repeat" description="4">
    <location>
        <begin position="34"/>
        <end position="38"/>
    </location>
</feature>
<feature type="repeat" description="5">
    <location>
        <begin position="44"/>
        <end position="48"/>
    </location>
</feature>
<feature type="repeat" description="6">
    <location>
        <begin position="49"/>
        <end position="53"/>
    </location>
</feature>
<feature type="repeat" description="7">
    <location>
        <begin position="54"/>
        <end position="58"/>
    </location>
</feature>
<feature type="repeat" description="8">
    <location>
        <begin position="59"/>
        <end position="63"/>
    </location>
</feature>
<feature type="repeat" description="9">
    <location>
        <begin position="64"/>
        <end position="68"/>
    </location>
</feature>
<feature type="repeat" description="10">
    <location>
        <begin position="69"/>
        <end position="73"/>
    </location>
</feature>
<feature type="repeat" description="11">
    <location>
        <begin position="74"/>
        <end position="78"/>
    </location>
</feature>
<feature type="repeat" description="12">
    <location>
        <begin position="79"/>
        <end position="83"/>
    </location>
</feature>
<feature type="repeat" description="13">
    <location>
        <begin position="84"/>
        <end position="88"/>
    </location>
</feature>
<feature type="repeat" description="14">
    <location>
        <begin position="89"/>
        <end position="93"/>
    </location>
</feature>
<feature type="repeat" description="15">
    <location>
        <begin position="94"/>
        <end position="98"/>
    </location>
</feature>
<feature type="repeat" description="16">
    <location>
        <begin position="99"/>
        <end position="103"/>
    </location>
</feature>
<feature type="repeat" description="17">
    <location>
        <begin position="104"/>
        <end position="108"/>
    </location>
</feature>
<feature type="repeat" description="18">
    <location>
        <begin position="109"/>
        <end position="113"/>
    </location>
</feature>
<feature type="repeat" description="19">
    <location>
        <begin position="114"/>
        <end position="118"/>
    </location>
</feature>
<feature type="repeat" description="20">
    <location>
        <begin position="119"/>
        <end position="123"/>
    </location>
</feature>
<feature type="region of interest" description="20 X 5 AA repeats of C-C-[GIKRQVHEML]-[SPTRV]-[STVQRCP]">
    <location>
        <begin position="5"/>
        <end position="123"/>
    </location>
</feature>
<feature type="sequence variant" id="VAR_064459" description="In dbSNP:rs11655310." evidence="1 2 3">
    <original>S</original>
    <variation>G</variation>
    <location>
        <position position="16"/>
    </location>
</feature>
<feature type="sequence variant" id="VAR_064460" description="In dbSNP:rs383835." evidence="1 2 3">
    <original>D</original>
    <variation>V</variation>
    <location>
        <position position="18"/>
    </location>
</feature>
<feature type="sequence variant" id="VAR_064461" description="In dbSNP:rs11650484." evidence="1 2 3">
    <original>T</original>
    <variation>S</variation>
    <location>
        <position position="68"/>
    </location>
</feature>
<feature type="sequence variant" id="VAR_088602" evidence="3">
    <original>C</original>
    <variation>CHPSCCISSCCRPSCCVSRCCRPQCCQSVCCQPTCCRPSCCISSCCRPSCCESSCC</variation>
    <location>
        <position position="110"/>
    </location>
</feature>
<feature type="sequence variant" id="VAR_064464" evidence="1 2 3">
    <original>S</original>
    <variation>C</variation>
    <location>
        <position position="113"/>
    </location>
</feature>
<feature type="sequence variant" id="VAR_088603" evidence="3">
    <original>S</original>
    <variation>SCCISSCCRPSCCVSRCCRPQCCQSVCCQPT</variation>
    <location>
        <position position="113"/>
    </location>
</feature>
<reference key="1">
    <citation type="journal article" date="2001" name="J. Biol. Chem.">
        <title>Characterization of a cluster of human high/ultrahigh sulfur keratin-associated protein genes embedded in the type I keratin gene domain on chromosome 17q12-21.</title>
        <authorList>
            <person name="Rogers M.A."/>
            <person name="Langbein L."/>
            <person name="Winter H."/>
            <person name="Ehmann C."/>
            <person name="Praetzel S."/>
            <person name="Korn B."/>
            <person name="Schweizer J."/>
        </authorList>
    </citation>
    <scope>NUCLEOTIDE SEQUENCE [MRNA]</scope>
    <scope>VARIANTS GLY-16; VAL-18; SER-68 AND CYS-113</scope>
    <source>
        <tissue>Scalp</tissue>
    </source>
</reference>
<reference key="2">
    <citation type="journal article" date="2005" name="J. Invest. Dermatol.">
        <title>Size polymorphisms in the human ultrahigh sulfur hair keratin-associated protein 4, KAP4, gene family.</title>
        <authorList>
            <person name="Kariya N."/>
            <person name="Shimomura Y."/>
            <person name="Ito M."/>
        </authorList>
    </citation>
    <scope>NUCLEOTIDE SEQUENCE [GENOMIC DNA]</scope>
    <scope>TISSUE SPECIFICITY</scope>
    <scope>POLYMORPHISM</scope>
    <scope>VARIANTS GLY-16; VAL-18; SER-68; HIS-PRO-SER-CYS-CYS-ILE-SER-SER-CYS-CYS-ARG-PRO-SER-CYS-CYS-VAL-SER-ARG-CYS-CYS-ARG-PRO-GLN-CYS-CYS-GLN-SER-VAL-CYS-CYS-GLN-PRO-THR-CYS-CYS-ARG-PRO-SER-CYS-CYS-ILE-SER-SER-CYS-CYS-ARG-PRO-SER-CYS-CYS-GLU-SER-SER-CYS-CYS-110 INS; CYS-113 AND CYS-CYS-ILE-SER-SER-CYS-CYS-ARG-PRO-SER-CYS-CYS-VAL-SER-ARG-CYS-CYS-ARG-PRO-GLN-CYS-CYS-GLN-SER-VAL-CYS-CYS-GLN-PRO-THR-113 INS</scope>
</reference>
<reference key="3">
    <citation type="journal article" date="2006" name="Nature">
        <title>DNA sequence of human chromosome 17 and analysis of rearrangement in the human lineage.</title>
        <authorList>
            <person name="Zody M.C."/>
            <person name="Garber M."/>
            <person name="Adams D.J."/>
            <person name="Sharpe T."/>
            <person name="Harrow J."/>
            <person name="Lupski J.R."/>
            <person name="Nicholson C."/>
            <person name="Searle S.M."/>
            <person name="Wilming L."/>
            <person name="Young S.K."/>
            <person name="Abouelleil A."/>
            <person name="Allen N.R."/>
            <person name="Bi W."/>
            <person name="Bloom T."/>
            <person name="Borowsky M.L."/>
            <person name="Bugalter B.E."/>
            <person name="Butler J."/>
            <person name="Chang J.L."/>
            <person name="Chen C.-K."/>
            <person name="Cook A."/>
            <person name="Corum B."/>
            <person name="Cuomo C.A."/>
            <person name="de Jong P.J."/>
            <person name="DeCaprio D."/>
            <person name="Dewar K."/>
            <person name="FitzGerald M."/>
            <person name="Gilbert J."/>
            <person name="Gibson R."/>
            <person name="Gnerre S."/>
            <person name="Goldstein S."/>
            <person name="Grafham D.V."/>
            <person name="Grocock R."/>
            <person name="Hafez N."/>
            <person name="Hagopian D.S."/>
            <person name="Hart E."/>
            <person name="Norman C.H."/>
            <person name="Humphray S."/>
            <person name="Jaffe D.B."/>
            <person name="Jones M."/>
            <person name="Kamal M."/>
            <person name="Khodiyar V.K."/>
            <person name="LaButti K."/>
            <person name="Laird G."/>
            <person name="Lehoczky J."/>
            <person name="Liu X."/>
            <person name="Lokyitsang T."/>
            <person name="Loveland J."/>
            <person name="Lui A."/>
            <person name="Macdonald P."/>
            <person name="Major J.E."/>
            <person name="Matthews L."/>
            <person name="Mauceli E."/>
            <person name="McCarroll S.A."/>
            <person name="Mihalev A.H."/>
            <person name="Mudge J."/>
            <person name="Nguyen C."/>
            <person name="Nicol R."/>
            <person name="O'Leary S.B."/>
            <person name="Osoegawa K."/>
            <person name="Schwartz D.C."/>
            <person name="Shaw-Smith C."/>
            <person name="Stankiewicz P."/>
            <person name="Steward C."/>
            <person name="Swarbreck D."/>
            <person name="Venkataraman V."/>
            <person name="Whittaker C.A."/>
            <person name="Yang X."/>
            <person name="Zimmer A.R."/>
            <person name="Bradley A."/>
            <person name="Hubbard T."/>
            <person name="Birren B.W."/>
            <person name="Rogers J."/>
            <person name="Lander E.S."/>
            <person name="Nusbaum C."/>
        </authorList>
    </citation>
    <scope>NUCLEOTIDE SEQUENCE [LARGE SCALE GENOMIC DNA]</scope>
</reference>
<reference key="4">
    <citation type="journal article" date="2004" name="Genome Res.">
        <title>The status, quality, and expansion of the NIH full-length cDNA project: the Mammalian Gene Collection (MGC).</title>
        <authorList>
            <consortium name="The MGC Project Team"/>
        </authorList>
    </citation>
    <scope>NUCLEOTIDE SEQUENCE [LARGE SCALE MRNA]</scope>
    <scope>VARIANTS GLY-16; VAL-18; SER-68 AND CYS-113</scope>
</reference>
<keyword id="KW-0416">Keratin</keyword>
<keyword id="KW-1267">Proteomics identification</keyword>
<keyword id="KW-1185">Reference proteome</keyword>
<keyword id="KW-0677">Repeat</keyword>
<comment type="function">
    <text>In the hair cortex, hair keratin intermediate filaments are embedded in an interfilamentous matrix, consisting of hair keratin-associated proteins (KRTAP), which are essential for the formation of a rigid and resistant hair shaft through their extensive disulfide bond cross-linking with abundant cysteine residues of hair keratins. The matrix proteins include the high-sulfur and high-glycine-tyrosine keratins.</text>
</comment>
<comment type="subunit">
    <text>Interacts with hair keratins.</text>
</comment>
<comment type="interaction">
    <interactant intactId="EBI-10302547">
        <id>Q9BYR0</id>
    </interactant>
    <interactant intactId="EBI-744545">
        <id>Q8NEC5</id>
        <label>CATSPER1</label>
    </interactant>
    <organismsDiffer>false</organismsDiffer>
    <experiments>3</experiments>
</comment>
<comment type="interaction">
    <interactant intactId="EBI-10302547">
        <id>Q9BYR0</id>
    </interactant>
    <interactant intactId="EBI-751192">
        <id>Q5HYJ3</id>
        <label>FAM76B</label>
    </interactant>
    <organismsDiffer>false</organismsDiffer>
    <experiments>3</experiments>
</comment>
<comment type="interaction">
    <interactant intactId="EBI-10302547">
        <id>Q9BYR0</id>
    </interactant>
    <interactant intactId="EBI-374781">
        <id>O76003</id>
        <label>GLRX3</label>
    </interactant>
    <organismsDiffer>false</organismsDiffer>
    <experiments>3</experiments>
</comment>
<comment type="interaction">
    <interactant intactId="EBI-10302547">
        <id>Q9BYR0</id>
    </interactant>
    <interactant intactId="EBI-740785">
        <id>P49639</id>
        <label>HOXA1</label>
    </interactant>
    <organismsDiffer>false</organismsDiffer>
    <experiments>3</experiments>
</comment>
<comment type="interaction">
    <interactant intactId="EBI-10302547">
        <id>Q9BYR0</id>
    </interactant>
    <interactant intactId="EBI-10171774">
        <id>P60410</id>
        <label>KRTAP10-8</label>
    </interactant>
    <organismsDiffer>false</organismsDiffer>
    <experiments>3</experiments>
</comment>
<comment type="interaction">
    <interactant intactId="EBI-10302547">
        <id>Q9BYR0</id>
    </interactant>
    <interactant intactId="EBI-3957672">
        <id>Q6PEX3</id>
        <label>KRTAP26-1</label>
    </interactant>
    <organismsDiffer>false</organismsDiffer>
    <experiments>3</experiments>
</comment>
<comment type="interaction">
    <interactant intactId="EBI-10302547">
        <id>Q9BYR0</id>
    </interactant>
    <interactant intactId="EBI-1044640">
        <id>Q9BYQ4</id>
        <label>KRTAP9-2</label>
    </interactant>
    <organismsDiffer>false</organismsDiffer>
    <experiments>3</experiments>
</comment>
<comment type="interaction">
    <interactant intactId="EBI-10302547">
        <id>Q9BYR0</id>
    </interactant>
    <interactant intactId="EBI-748397">
        <id>P50222</id>
        <label>MEOX2</label>
    </interactant>
    <organismsDiffer>false</organismsDiffer>
    <experiments>3</experiments>
</comment>
<comment type="interaction">
    <interactant intactId="EBI-10302547">
        <id>Q9BYR0</id>
    </interactant>
    <interactant intactId="EBI-945833">
        <id>Q7Z3S9</id>
        <label>NOTCH2NLA</label>
    </interactant>
    <organismsDiffer>false</organismsDiffer>
    <experiments>3</experiments>
</comment>
<comment type="interaction">
    <interactant intactId="EBI-10302547">
        <id>Q9BYR0</id>
    </interactant>
    <interactant intactId="EBI-740446">
        <id>P32242</id>
        <label>OTX1</label>
    </interactant>
    <organismsDiffer>false</organismsDiffer>
    <experiments>3</experiments>
</comment>
<comment type="interaction">
    <interactant intactId="EBI-10302547">
        <id>Q9BYR0</id>
    </interactant>
    <interactant intactId="EBI-750494">
        <id>P49901</id>
        <label>SMCP</label>
    </interactant>
    <organismsDiffer>false</organismsDiffer>
    <experiments>3</experiments>
</comment>
<comment type="interaction">
    <interactant intactId="EBI-10302547">
        <id>Q9BYR0</id>
    </interactant>
    <interactant intactId="EBI-742487">
        <id>O43597</id>
        <label>SPRY2</label>
    </interactant>
    <organismsDiffer>false</organismsDiffer>
    <experiments>3</experiments>
</comment>
<comment type="tissue specificity">
    <text evidence="3">Expressed in the hair follicles.</text>
</comment>
<comment type="polymorphism">
    <text evidence="3">Numerous size variants are present in KRTAP4 gene family, mainly within cysteine-rich repeat segments. The sequence shown in this entry corresponds to variant KAP4.7-v1.</text>
</comment>
<comment type="similarity">
    <text evidence="4">Belongs to the KRTAP type 4 family.</text>
</comment>
<accession>Q9BYR0</accession>
<accession>A0AVM6</accession>
<accession>A8MQ08</accession>
<accession>A8MTL4</accession>
<dbReference type="EMBL" id="AJ406939">
    <property type="protein sequence ID" value="CAC27578.1"/>
    <property type="molecule type" value="mRNA"/>
</dbReference>
<dbReference type="EMBL" id="AC100808">
    <property type="status" value="NOT_ANNOTATED_CDS"/>
    <property type="molecule type" value="Genomic_DNA"/>
</dbReference>
<dbReference type="EMBL" id="BC126421">
    <property type="protein sequence ID" value="AAI26422.1"/>
    <property type="molecule type" value="mRNA"/>
</dbReference>
<dbReference type="EMBL" id="BC126423">
    <property type="protein sequence ID" value="AAI26424.1"/>
    <property type="molecule type" value="mRNA"/>
</dbReference>
<dbReference type="RefSeq" id="NP_149050.3">
    <property type="nucleotide sequence ID" value="NM_033061.3"/>
</dbReference>
<dbReference type="RefSeq" id="XP_003846526.1">
    <property type="nucleotide sequence ID" value="XM_003846478.1"/>
</dbReference>
<dbReference type="FunCoup" id="Q9BYR0">
    <property type="interactions" value="19"/>
</dbReference>
<dbReference type="IntAct" id="Q9BYR0">
    <property type="interactions" value="12"/>
</dbReference>
<dbReference type="BioMuta" id="KRTAP4-7"/>
<dbReference type="DMDM" id="322510047"/>
<dbReference type="MassIVE" id="Q9BYR0"/>
<dbReference type="PeptideAtlas" id="Q9BYR0"/>
<dbReference type="Ensembl" id="ENST00000391417.6">
    <property type="protein sequence ID" value="ENSP00000375236.4"/>
    <property type="gene ID" value="ENSG00000240871.7"/>
</dbReference>
<dbReference type="Ensembl" id="ENST00000709617.1">
    <property type="protein sequence ID" value="ENSP00000517802.1"/>
    <property type="gene ID" value="ENSG00000292053.1"/>
</dbReference>
<dbReference type="GeneID" id="100132476"/>
<dbReference type="KEGG" id="hsa:100132476"/>
<dbReference type="MANE-Select" id="ENST00000391417.6">
    <property type="protein sequence ID" value="ENSP00000375236.4"/>
    <property type="RefSeq nucleotide sequence ID" value="NM_033061.4"/>
    <property type="RefSeq protein sequence ID" value="NP_149050.3"/>
</dbReference>
<dbReference type="UCSC" id="uc010wfn.3">
    <property type="organism name" value="human"/>
</dbReference>
<dbReference type="AGR" id="HGNC:18898"/>
<dbReference type="CTD" id="100132476"/>
<dbReference type="GeneCards" id="KRTAP4-7"/>
<dbReference type="HGNC" id="HGNC:18898">
    <property type="gene designation" value="KRTAP4-7"/>
</dbReference>
<dbReference type="HPA" id="ENSG00000240871">
    <property type="expression patterns" value="Tissue enriched (skin)"/>
</dbReference>
<dbReference type="neXtProt" id="NX_Q9BYR0"/>
<dbReference type="OpenTargets" id="ENSG00000240871"/>
<dbReference type="PharmGKB" id="PA38747"/>
<dbReference type="VEuPathDB" id="HostDB:ENSG00000240871"/>
<dbReference type="GeneTree" id="ENSGT00940000159486"/>
<dbReference type="HOGENOM" id="CLU_113141_2_0_1"/>
<dbReference type="InParanoid" id="Q9BYR0"/>
<dbReference type="OMA" id="CCSETCC"/>
<dbReference type="PAN-GO" id="Q9BYR0">
    <property type="GO annotations" value="0 GO annotations based on evolutionary models"/>
</dbReference>
<dbReference type="TreeFam" id="TF351356"/>
<dbReference type="PathwayCommons" id="Q9BYR0"/>
<dbReference type="Reactome" id="R-HSA-6805567">
    <property type="pathway name" value="Keratinization"/>
</dbReference>
<dbReference type="SignaLink" id="Q9BYR0"/>
<dbReference type="BioGRID-ORCS" id="100996750">
    <property type="hits" value="0 hits in 4 CRISPR screens"/>
</dbReference>
<dbReference type="Pharos" id="Q9BYR0">
    <property type="development level" value="Tbio"/>
</dbReference>
<dbReference type="PRO" id="PR:Q9BYR0"/>
<dbReference type="Proteomes" id="UP000005640">
    <property type="component" value="Chromosome 17"/>
</dbReference>
<dbReference type="RNAct" id="Q9BYR0">
    <property type="molecule type" value="protein"/>
</dbReference>
<dbReference type="Bgee" id="ENSG00000240871">
    <property type="expression patterns" value="Expressed in skin of abdomen and 23 other cell types or tissues"/>
</dbReference>
<dbReference type="ExpressionAtlas" id="Q9BYR0">
    <property type="expression patterns" value="baseline and differential"/>
</dbReference>
<dbReference type="GO" id="GO:0005829">
    <property type="term" value="C:cytosol"/>
    <property type="evidence" value="ECO:0000304"/>
    <property type="project" value="Reactome"/>
</dbReference>
<dbReference type="GO" id="GO:0045095">
    <property type="term" value="C:keratin filament"/>
    <property type="evidence" value="ECO:0007669"/>
    <property type="project" value="InterPro"/>
</dbReference>
<dbReference type="GO" id="GO:0042633">
    <property type="term" value="P:hair cycle"/>
    <property type="evidence" value="ECO:0000314"/>
    <property type="project" value="UniProtKB"/>
</dbReference>
<dbReference type="InterPro" id="IPR002494">
    <property type="entry name" value="KAP"/>
</dbReference>
<dbReference type="PANTHER" id="PTHR23262:SF67">
    <property type="entry name" value="HCG2042992-RELATED"/>
    <property type="match status" value="1"/>
</dbReference>
<dbReference type="PANTHER" id="PTHR23262">
    <property type="entry name" value="KERATIN ASSOCIATED PROTEIN"/>
    <property type="match status" value="1"/>
</dbReference>
<dbReference type="Pfam" id="PF13885">
    <property type="entry name" value="Keratin_B2_2"/>
    <property type="match status" value="2"/>
</dbReference>
<organism>
    <name type="scientific">Homo sapiens</name>
    <name type="common">Human</name>
    <dbReference type="NCBI Taxonomy" id="9606"/>
    <lineage>
        <taxon>Eukaryota</taxon>
        <taxon>Metazoa</taxon>
        <taxon>Chordata</taxon>
        <taxon>Craniata</taxon>
        <taxon>Vertebrata</taxon>
        <taxon>Euteleostomi</taxon>
        <taxon>Mammalia</taxon>
        <taxon>Eutheria</taxon>
        <taxon>Euarchontoglires</taxon>
        <taxon>Primates</taxon>
        <taxon>Haplorrhini</taxon>
        <taxon>Catarrhini</taxon>
        <taxon>Hominidae</taxon>
        <taxon>Homo</taxon>
    </lineage>
</organism>
<proteinExistence type="evidence at protein level"/>
<sequence>MVSSCCGSVCSDQGCSQDLCQETCCRPSCCQTTCCRTTCYRPSCCVSSCCRPQCCQSVCCQPTCCRPTCCETTCCHPRCCISSCCRPSCCMSSCCKPQCCQSVCCQPTCCRPSCCRPCCCLRPVCGRVSCHTTCYRPTCVISTCPRPLCCASSCC</sequence>
<name>KRA47_HUMAN</name>
<protein>
    <recommendedName>
        <fullName>Keratin-associated protein 4-7</fullName>
    </recommendedName>
    <alternativeName>
        <fullName>Keratin-associated protein 4.7</fullName>
    </alternativeName>
    <alternativeName>
        <fullName>Ultrahigh sulfur keratin-associated protein 4.7</fullName>
    </alternativeName>
</protein>
<evidence type="ECO:0000269" key="1">
    <source>
    </source>
</evidence>
<evidence type="ECO:0000269" key="2">
    <source>
    </source>
</evidence>
<evidence type="ECO:0000269" key="3">
    <source>
    </source>
</evidence>
<evidence type="ECO:0000305" key="4"/>